<organism>
    <name type="scientific">Chlamydia pneumoniae</name>
    <name type="common">Chlamydophila pneumoniae</name>
    <dbReference type="NCBI Taxonomy" id="83558"/>
    <lineage>
        <taxon>Bacteria</taxon>
        <taxon>Pseudomonadati</taxon>
        <taxon>Chlamydiota</taxon>
        <taxon>Chlamydiia</taxon>
        <taxon>Chlamydiales</taxon>
        <taxon>Chlamydiaceae</taxon>
        <taxon>Chlamydia/Chlamydophila group</taxon>
        <taxon>Chlamydia</taxon>
    </lineage>
</organism>
<proteinExistence type="inferred from homology"/>
<accession>Q9Z7Y3</accession>
<accession>Q9JQ78</accession>
<name>SYR_CHLPN</name>
<feature type="chain" id="PRO_0000151546" description="Arginine--tRNA ligase">
    <location>
        <begin position="1"/>
        <end position="561"/>
    </location>
</feature>
<feature type="short sequence motif" description="'HIGH' region">
    <location>
        <begin position="123"/>
        <end position="133"/>
    </location>
</feature>
<protein>
    <recommendedName>
        <fullName>Arginine--tRNA ligase</fullName>
        <ecNumber>6.1.1.19</ecNumber>
    </recommendedName>
    <alternativeName>
        <fullName>Arginyl-tRNA synthetase</fullName>
        <shortName>ArgRS</shortName>
    </alternativeName>
</protein>
<keyword id="KW-0030">Aminoacyl-tRNA synthetase</keyword>
<keyword id="KW-0067">ATP-binding</keyword>
<keyword id="KW-0963">Cytoplasm</keyword>
<keyword id="KW-0436">Ligase</keyword>
<keyword id="KW-0547">Nucleotide-binding</keyword>
<keyword id="KW-0648">Protein biosynthesis</keyword>
<gene>
    <name type="primary">argS</name>
    <name type="ordered locus">CPn_0570</name>
    <name type="ordered locus">CP_0179</name>
    <name type="ordered locus">CpB0593</name>
</gene>
<dbReference type="EC" id="6.1.1.19"/>
<dbReference type="EMBL" id="AE001363">
    <property type="protein sequence ID" value="AAD18710.1"/>
    <property type="molecule type" value="Genomic_DNA"/>
</dbReference>
<dbReference type="EMBL" id="AE002161">
    <property type="protein sequence ID" value="AAF38053.1"/>
    <property type="molecule type" value="Genomic_DNA"/>
</dbReference>
<dbReference type="EMBL" id="BA000008">
    <property type="protein sequence ID" value="BAA98776.1"/>
    <property type="molecule type" value="Genomic_DNA"/>
</dbReference>
<dbReference type="EMBL" id="AE009440">
    <property type="protein sequence ID" value="AAP98521.1"/>
    <property type="molecule type" value="Genomic_DNA"/>
</dbReference>
<dbReference type="PIR" id="C72063">
    <property type="entry name" value="C72063"/>
</dbReference>
<dbReference type="PIR" id="F86561">
    <property type="entry name" value="F86561"/>
</dbReference>
<dbReference type="RefSeq" id="NP_224766.1">
    <property type="nucleotide sequence ID" value="NC_000922.1"/>
</dbReference>
<dbReference type="RefSeq" id="WP_010883208.1">
    <property type="nucleotide sequence ID" value="NZ_LN847257.1"/>
</dbReference>
<dbReference type="SMR" id="Q9Z7Y3"/>
<dbReference type="STRING" id="406984.CPK_ORF01088"/>
<dbReference type="GeneID" id="45050614"/>
<dbReference type="KEGG" id="cpa:CP_0179"/>
<dbReference type="KEGG" id="cpj:argS"/>
<dbReference type="KEGG" id="cpn:CPn_0570"/>
<dbReference type="KEGG" id="cpt:CpB0593"/>
<dbReference type="PATRIC" id="fig|115713.3.peg.635"/>
<dbReference type="eggNOG" id="COG0018">
    <property type="taxonomic scope" value="Bacteria"/>
</dbReference>
<dbReference type="HOGENOM" id="CLU_006406_5_1_0"/>
<dbReference type="OrthoDB" id="9805987at2"/>
<dbReference type="Proteomes" id="UP000000583">
    <property type="component" value="Chromosome"/>
</dbReference>
<dbReference type="Proteomes" id="UP000000801">
    <property type="component" value="Chromosome"/>
</dbReference>
<dbReference type="GO" id="GO:0005737">
    <property type="term" value="C:cytoplasm"/>
    <property type="evidence" value="ECO:0007669"/>
    <property type="project" value="UniProtKB-SubCell"/>
</dbReference>
<dbReference type="GO" id="GO:0004814">
    <property type="term" value="F:arginine-tRNA ligase activity"/>
    <property type="evidence" value="ECO:0007669"/>
    <property type="project" value="UniProtKB-UniRule"/>
</dbReference>
<dbReference type="GO" id="GO:0005524">
    <property type="term" value="F:ATP binding"/>
    <property type="evidence" value="ECO:0007669"/>
    <property type="project" value="UniProtKB-UniRule"/>
</dbReference>
<dbReference type="GO" id="GO:0006420">
    <property type="term" value="P:arginyl-tRNA aminoacylation"/>
    <property type="evidence" value="ECO:0007669"/>
    <property type="project" value="UniProtKB-UniRule"/>
</dbReference>
<dbReference type="CDD" id="cd00671">
    <property type="entry name" value="ArgRS_core"/>
    <property type="match status" value="1"/>
</dbReference>
<dbReference type="FunFam" id="3.40.50.620:FF:000116">
    <property type="entry name" value="Arginine--tRNA ligase"/>
    <property type="match status" value="1"/>
</dbReference>
<dbReference type="FunFam" id="1.10.730.10:FF:000006">
    <property type="entry name" value="Arginyl-tRNA synthetase 2, mitochondrial"/>
    <property type="match status" value="1"/>
</dbReference>
<dbReference type="Gene3D" id="3.30.1360.70">
    <property type="entry name" value="Arginyl tRNA synthetase N-terminal domain"/>
    <property type="match status" value="1"/>
</dbReference>
<dbReference type="Gene3D" id="3.40.50.620">
    <property type="entry name" value="HUPs"/>
    <property type="match status" value="1"/>
</dbReference>
<dbReference type="Gene3D" id="1.10.730.10">
    <property type="entry name" value="Isoleucyl-tRNA Synthetase, Domain 1"/>
    <property type="match status" value="1"/>
</dbReference>
<dbReference type="HAMAP" id="MF_00123">
    <property type="entry name" value="Arg_tRNA_synth"/>
    <property type="match status" value="1"/>
</dbReference>
<dbReference type="InterPro" id="IPR001412">
    <property type="entry name" value="aa-tRNA-synth_I_CS"/>
</dbReference>
<dbReference type="InterPro" id="IPR001278">
    <property type="entry name" value="Arg-tRNA-ligase"/>
</dbReference>
<dbReference type="InterPro" id="IPR005148">
    <property type="entry name" value="Arg-tRNA-synth_N"/>
</dbReference>
<dbReference type="InterPro" id="IPR036695">
    <property type="entry name" value="Arg-tRNA-synth_N_sf"/>
</dbReference>
<dbReference type="InterPro" id="IPR035684">
    <property type="entry name" value="ArgRS_core"/>
</dbReference>
<dbReference type="InterPro" id="IPR008909">
    <property type="entry name" value="DALR_anticod-bd"/>
</dbReference>
<dbReference type="InterPro" id="IPR014729">
    <property type="entry name" value="Rossmann-like_a/b/a_fold"/>
</dbReference>
<dbReference type="InterPro" id="IPR009080">
    <property type="entry name" value="tRNAsynth_Ia_anticodon-bd"/>
</dbReference>
<dbReference type="NCBIfam" id="TIGR00456">
    <property type="entry name" value="argS"/>
    <property type="match status" value="1"/>
</dbReference>
<dbReference type="PANTHER" id="PTHR11956:SF5">
    <property type="entry name" value="ARGININE--TRNA LIGASE, CYTOPLASMIC"/>
    <property type="match status" value="1"/>
</dbReference>
<dbReference type="PANTHER" id="PTHR11956">
    <property type="entry name" value="ARGINYL-TRNA SYNTHETASE"/>
    <property type="match status" value="1"/>
</dbReference>
<dbReference type="Pfam" id="PF03485">
    <property type="entry name" value="Arg_tRNA_synt_N"/>
    <property type="match status" value="1"/>
</dbReference>
<dbReference type="Pfam" id="PF05746">
    <property type="entry name" value="DALR_1"/>
    <property type="match status" value="1"/>
</dbReference>
<dbReference type="Pfam" id="PF00750">
    <property type="entry name" value="tRNA-synt_1d"/>
    <property type="match status" value="1"/>
</dbReference>
<dbReference type="PRINTS" id="PR01038">
    <property type="entry name" value="TRNASYNTHARG"/>
</dbReference>
<dbReference type="SMART" id="SM01016">
    <property type="entry name" value="Arg_tRNA_synt_N"/>
    <property type="match status" value="1"/>
</dbReference>
<dbReference type="SMART" id="SM00836">
    <property type="entry name" value="DALR_1"/>
    <property type="match status" value="1"/>
</dbReference>
<dbReference type="SUPFAM" id="SSF47323">
    <property type="entry name" value="Anticodon-binding domain of a subclass of class I aminoacyl-tRNA synthetases"/>
    <property type="match status" value="1"/>
</dbReference>
<dbReference type="SUPFAM" id="SSF55190">
    <property type="entry name" value="Arginyl-tRNA synthetase (ArgRS), N-terminal 'additional' domain"/>
    <property type="match status" value="1"/>
</dbReference>
<dbReference type="SUPFAM" id="SSF52374">
    <property type="entry name" value="Nucleotidylyl transferase"/>
    <property type="match status" value="1"/>
</dbReference>
<dbReference type="PROSITE" id="PS00178">
    <property type="entry name" value="AA_TRNA_LIGASE_I"/>
    <property type="match status" value="1"/>
</dbReference>
<sequence>MSTLLSILSVICSQAIAKAFPNLEDWAPEITPSTKEHFGHYQCNDAMKLARVLKKAPRAIAEAIVAELPQEPFSLIEIAGAGFINFTFSPVFLNQQLEHFKDALKLGFQVSQPKKIIIDFSSPNIAKDMHVGHLRSTIIGDSLARIFSYVGHDVLRLNHIGDWGTAFGMLITYLQENPCDYSDLEDLTSLYKKAYVCFTNDEEFKKRSQQNVVALQAKDPQAIAIWEKICETSEKAFQKIYDILDIVVEKRGESFYNPFLPEIIEDLEKKGLLTVSNDAKCVFHEAFSIPFMVQKSDGGYNYATTDLAAMRYRIEEDHADKIIIVTDLGQSLHFQLLEATAIAAGYLQPGIFSHVGFGLVLDPQGKKLKTRSGENVKLRELLDTAIEKAEEALREHRPELTDEAIQERAPVIGINAIKYSDLSSHRTSDYVFSFEKMLRFEGNTAMFLLYAYVRIQGIKRRLGISQLSLEGPPEIQEPAEELLALTLLRFPEALESTIKELCPHFLTDYLYNLTHKFNGFFRDSHIQDSPYAKSRLFLCALAEQVLATGMHLLGLKTLERL</sequence>
<reference key="1">
    <citation type="journal article" date="1999" name="Nat. Genet.">
        <title>Comparative genomes of Chlamydia pneumoniae and C. trachomatis.</title>
        <authorList>
            <person name="Kalman S."/>
            <person name="Mitchell W.P."/>
            <person name="Marathe R."/>
            <person name="Lammel C.J."/>
            <person name="Fan J."/>
            <person name="Hyman R.W."/>
            <person name="Olinger L."/>
            <person name="Grimwood J."/>
            <person name="Davis R.W."/>
            <person name="Stephens R.S."/>
        </authorList>
    </citation>
    <scope>NUCLEOTIDE SEQUENCE [LARGE SCALE GENOMIC DNA]</scope>
    <source>
        <strain>CWL029</strain>
    </source>
</reference>
<reference key="2">
    <citation type="journal article" date="2000" name="Nucleic Acids Res.">
        <title>Genome sequences of Chlamydia trachomatis MoPn and Chlamydia pneumoniae AR39.</title>
        <authorList>
            <person name="Read T.D."/>
            <person name="Brunham R.C."/>
            <person name="Shen C."/>
            <person name="Gill S.R."/>
            <person name="Heidelberg J.F."/>
            <person name="White O."/>
            <person name="Hickey E.K."/>
            <person name="Peterson J.D."/>
            <person name="Utterback T.R."/>
            <person name="Berry K.J."/>
            <person name="Bass S."/>
            <person name="Linher K.D."/>
            <person name="Weidman J.F."/>
            <person name="Khouri H.M."/>
            <person name="Craven B."/>
            <person name="Bowman C."/>
            <person name="Dodson R.J."/>
            <person name="Gwinn M.L."/>
            <person name="Nelson W.C."/>
            <person name="DeBoy R.T."/>
            <person name="Kolonay J.F."/>
            <person name="McClarty G."/>
            <person name="Salzberg S.L."/>
            <person name="Eisen J.A."/>
            <person name="Fraser C.M."/>
        </authorList>
    </citation>
    <scope>NUCLEOTIDE SEQUENCE [LARGE SCALE GENOMIC DNA]</scope>
    <source>
        <strain>AR39</strain>
    </source>
</reference>
<reference key="3">
    <citation type="journal article" date="2000" name="Nucleic Acids Res.">
        <title>Comparison of whole genome sequences of Chlamydia pneumoniae J138 from Japan and CWL029 from USA.</title>
        <authorList>
            <person name="Shirai M."/>
            <person name="Hirakawa H."/>
            <person name="Kimoto M."/>
            <person name="Tabuchi M."/>
            <person name="Kishi F."/>
            <person name="Ouchi K."/>
            <person name="Shiba T."/>
            <person name="Ishii K."/>
            <person name="Hattori M."/>
            <person name="Kuhara S."/>
            <person name="Nakazawa T."/>
        </authorList>
    </citation>
    <scope>NUCLEOTIDE SEQUENCE [LARGE SCALE GENOMIC DNA]</scope>
    <source>
        <strain>J138</strain>
    </source>
</reference>
<reference key="4">
    <citation type="submission" date="2002-05" db="EMBL/GenBank/DDBJ databases">
        <title>The genome sequence of Chlamydia pneumoniae TW183 and comparison with other Chlamydia strains based on whole genome sequence analysis.</title>
        <authorList>
            <person name="Geng M.M."/>
            <person name="Schuhmacher A."/>
            <person name="Muehldorfer I."/>
            <person name="Bensch K.W."/>
            <person name="Schaefer K.P."/>
            <person name="Schneider S."/>
            <person name="Pohl T."/>
            <person name="Essig A."/>
            <person name="Marre R."/>
            <person name="Melchers K."/>
        </authorList>
    </citation>
    <scope>NUCLEOTIDE SEQUENCE [LARGE SCALE GENOMIC DNA]</scope>
    <source>
        <strain>TW-183</strain>
    </source>
</reference>
<comment type="catalytic activity">
    <reaction>
        <text>tRNA(Arg) + L-arginine + ATP = L-arginyl-tRNA(Arg) + AMP + diphosphate</text>
        <dbReference type="Rhea" id="RHEA:20301"/>
        <dbReference type="Rhea" id="RHEA-COMP:9658"/>
        <dbReference type="Rhea" id="RHEA-COMP:9673"/>
        <dbReference type="ChEBI" id="CHEBI:30616"/>
        <dbReference type="ChEBI" id="CHEBI:32682"/>
        <dbReference type="ChEBI" id="CHEBI:33019"/>
        <dbReference type="ChEBI" id="CHEBI:78442"/>
        <dbReference type="ChEBI" id="CHEBI:78513"/>
        <dbReference type="ChEBI" id="CHEBI:456215"/>
        <dbReference type="EC" id="6.1.1.19"/>
    </reaction>
</comment>
<comment type="subunit">
    <text evidence="1">Monomer.</text>
</comment>
<comment type="subcellular location">
    <subcellularLocation>
        <location evidence="1">Cytoplasm</location>
    </subcellularLocation>
</comment>
<comment type="similarity">
    <text evidence="2">Belongs to the class-I aminoacyl-tRNA synthetase family.</text>
</comment>
<evidence type="ECO:0000250" key="1"/>
<evidence type="ECO:0000305" key="2"/>